<comment type="function">
    <text evidence="1">Produces ATP from ADP in the presence of a proton gradient across the membrane. The gamma chain is believed to be important in regulating ATPase activity and the flow of protons through the CF(0) complex.</text>
</comment>
<comment type="subunit">
    <text evidence="1">F-type ATPases have 2 components, CF(1) - the catalytic core - and CF(0) - the membrane proton channel. CF(1) has five subunits: alpha(3), beta(3), gamma(1), delta(1), epsilon(1). CF(0) has three main subunits: a, b and c.</text>
</comment>
<comment type="subcellular location">
    <subcellularLocation>
        <location evidence="1">Cell membrane</location>
        <topology evidence="1">Peripheral membrane protein</topology>
    </subcellularLocation>
</comment>
<comment type="similarity">
    <text evidence="1">Belongs to the ATPase gamma chain family.</text>
</comment>
<feature type="initiator methionine" description="Removed" evidence="2">
    <location>
        <position position="1"/>
    </location>
</feature>
<feature type="chain" id="PRO_1000053257" description="ATP synthase gamma chain">
    <location>
        <begin position="2"/>
        <end position="307"/>
    </location>
</feature>
<feature type="helix" evidence="5">
    <location>
        <begin position="4"/>
        <end position="59"/>
    </location>
</feature>
<feature type="helix" evidence="5">
    <location>
        <begin position="66"/>
        <end position="68"/>
    </location>
</feature>
<feature type="strand" evidence="5">
    <location>
        <begin position="76"/>
        <end position="82"/>
    </location>
</feature>
<feature type="strand" evidence="3">
    <location>
        <begin position="85"/>
        <end position="87"/>
    </location>
</feature>
<feature type="strand" evidence="5">
    <location>
        <begin position="89"/>
        <end position="91"/>
    </location>
</feature>
<feature type="helix" evidence="5">
    <location>
        <begin position="92"/>
        <end position="109"/>
    </location>
</feature>
<feature type="strand" evidence="5">
    <location>
        <begin position="113"/>
        <end position="120"/>
    </location>
</feature>
<feature type="helix" evidence="5">
    <location>
        <begin position="121"/>
        <end position="130"/>
    </location>
</feature>
<feature type="strand" evidence="5">
    <location>
        <begin position="134"/>
        <end position="138"/>
    </location>
</feature>
<feature type="strand" evidence="5">
    <location>
        <begin position="142"/>
        <end position="144"/>
    </location>
</feature>
<feature type="helix" evidence="5">
    <location>
        <begin position="147"/>
        <end position="163"/>
    </location>
</feature>
<feature type="turn" evidence="4">
    <location>
        <begin position="164"/>
        <end position="166"/>
    </location>
</feature>
<feature type="helix" evidence="5">
    <location>
        <begin position="173"/>
        <end position="175"/>
    </location>
</feature>
<feature type="strand" evidence="5">
    <location>
        <begin position="183"/>
        <end position="190"/>
    </location>
</feature>
<feature type="strand" evidence="4">
    <location>
        <begin position="192"/>
        <end position="194"/>
    </location>
</feature>
<feature type="strand" evidence="5">
    <location>
        <begin position="196"/>
        <end position="210"/>
    </location>
</feature>
<feature type="strand" evidence="5">
    <location>
        <begin position="223"/>
        <end position="226"/>
    </location>
</feature>
<feature type="helix" evidence="5">
    <location>
        <begin position="228"/>
        <end position="303"/>
    </location>
</feature>
<evidence type="ECO:0000255" key="1">
    <source>
        <dbReference type="HAMAP-Rule" id="MF_00815"/>
    </source>
</evidence>
<evidence type="ECO:0000269" key="2">
    <source>
    </source>
</evidence>
<evidence type="ECO:0007829" key="3">
    <source>
        <dbReference type="PDB" id="7NJN"/>
    </source>
</evidence>
<evidence type="ECO:0007829" key="4">
    <source>
        <dbReference type="PDB" id="7NJR"/>
    </source>
</evidence>
<evidence type="ECO:0007829" key="5">
    <source>
        <dbReference type="PDB" id="7NJS"/>
    </source>
</evidence>
<name>ATPG_MYCS2</name>
<gene>
    <name evidence="1" type="primary">atpG</name>
    <name type="ordered locus">MSMEG_4937</name>
    <name type="ordered locus">MSMEI_4810</name>
</gene>
<proteinExistence type="evidence at protein level"/>
<protein>
    <recommendedName>
        <fullName evidence="1">ATP synthase gamma chain</fullName>
    </recommendedName>
    <alternativeName>
        <fullName evidence="1">ATP synthase F1 sector gamma subunit</fullName>
    </alternativeName>
    <alternativeName>
        <fullName evidence="1">F-ATPase gamma subunit</fullName>
    </alternativeName>
</protein>
<dbReference type="EMBL" id="CP000480">
    <property type="protein sequence ID" value="ABK75438.1"/>
    <property type="molecule type" value="Genomic_DNA"/>
</dbReference>
<dbReference type="EMBL" id="CP001663">
    <property type="protein sequence ID" value="AFP41255.1"/>
    <property type="molecule type" value="Genomic_DNA"/>
</dbReference>
<dbReference type="RefSeq" id="WP_003896329.1">
    <property type="nucleotide sequence ID" value="NZ_SIJM01000067.1"/>
</dbReference>
<dbReference type="RefSeq" id="YP_889189.1">
    <property type="nucleotide sequence ID" value="NC_008596.1"/>
</dbReference>
<dbReference type="PDB" id="6FOC">
    <property type="method" value="X-ray"/>
    <property type="resolution" value="4.00 A"/>
    <property type="chains" value="G=1-307"/>
</dbReference>
<dbReference type="PDB" id="7JG5">
    <property type="method" value="EM"/>
    <property type="resolution" value="3.40 A"/>
    <property type="chains" value="G=1-307"/>
</dbReference>
<dbReference type="PDB" id="7JG6">
    <property type="method" value="EM"/>
    <property type="resolution" value="3.70 A"/>
    <property type="chains" value="G=1-307"/>
</dbReference>
<dbReference type="PDB" id="7JG7">
    <property type="method" value="EM"/>
    <property type="resolution" value="3.50 A"/>
    <property type="chains" value="G=1-307"/>
</dbReference>
<dbReference type="PDB" id="7JG8">
    <property type="method" value="EM"/>
    <property type="resolution" value="3.30 A"/>
    <property type="chains" value="G=1-307"/>
</dbReference>
<dbReference type="PDB" id="7JG9">
    <property type="method" value="EM"/>
    <property type="resolution" value="3.40 A"/>
    <property type="chains" value="G=1-307"/>
</dbReference>
<dbReference type="PDB" id="7JGA">
    <property type="method" value="EM"/>
    <property type="resolution" value="3.20 A"/>
    <property type="chains" value="G=1-307"/>
</dbReference>
<dbReference type="PDB" id="7NJK">
    <property type="method" value="EM"/>
    <property type="resolution" value="2.52 A"/>
    <property type="chains" value="G=1-307"/>
</dbReference>
<dbReference type="PDB" id="7NJL">
    <property type="method" value="EM"/>
    <property type="resolution" value="2.71 A"/>
    <property type="chains" value="G=1-307"/>
</dbReference>
<dbReference type="PDB" id="7NJM">
    <property type="method" value="EM"/>
    <property type="resolution" value="2.84 A"/>
    <property type="chains" value="G=1-307"/>
</dbReference>
<dbReference type="PDB" id="7NJN">
    <property type="method" value="EM"/>
    <property type="resolution" value="2.64 A"/>
    <property type="chains" value="G=1-307"/>
</dbReference>
<dbReference type="PDB" id="7NJO">
    <property type="method" value="EM"/>
    <property type="resolution" value="2.92 A"/>
    <property type="chains" value="G=1-307"/>
</dbReference>
<dbReference type="PDB" id="7NJP">
    <property type="method" value="EM"/>
    <property type="resolution" value="2.84 A"/>
    <property type="chains" value="G=1-307"/>
</dbReference>
<dbReference type="PDB" id="7NJQ">
    <property type="method" value="EM"/>
    <property type="resolution" value="2.67 A"/>
    <property type="chains" value="G=1-307"/>
</dbReference>
<dbReference type="PDB" id="7NJR">
    <property type="method" value="EM"/>
    <property type="resolution" value="2.56 A"/>
    <property type="chains" value="G=1-307"/>
</dbReference>
<dbReference type="PDB" id="7NJS">
    <property type="method" value="EM"/>
    <property type="resolution" value="2.46 A"/>
    <property type="chains" value="G=1-307"/>
</dbReference>
<dbReference type="PDB" id="7NK7">
    <property type="method" value="EM"/>
    <property type="resolution" value="2.11 A"/>
    <property type="chains" value="G=1-307"/>
</dbReference>
<dbReference type="PDB" id="7NK9">
    <property type="method" value="EM"/>
    <property type="resolution" value="2.90 A"/>
    <property type="chains" value="G=1-307"/>
</dbReference>
<dbReference type="PDB" id="7NKB">
    <property type="method" value="EM"/>
    <property type="resolution" value="2.90 A"/>
    <property type="chains" value="G=1-307"/>
</dbReference>
<dbReference type="PDB" id="7NKH">
    <property type="method" value="EM"/>
    <property type="resolution" value="2.78 A"/>
    <property type="chains" value="G=1-307"/>
</dbReference>
<dbReference type="PDB" id="7NKJ">
    <property type="method" value="EM"/>
    <property type="resolution" value="2.17 A"/>
    <property type="chains" value="G=1-307"/>
</dbReference>
<dbReference type="PDB" id="7NKK">
    <property type="method" value="EM"/>
    <property type="resolution" value="3.60 A"/>
    <property type="chains" value="G=1-307"/>
</dbReference>
<dbReference type="PDB" id="7NKN">
    <property type="method" value="EM"/>
    <property type="resolution" value="2.71 A"/>
    <property type="chains" value="G=1-307"/>
</dbReference>
<dbReference type="PDB" id="7NKP">
    <property type="method" value="EM"/>
    <property type="resolution" value="4.06 A"/>
    <property type="chains" value="G=1-307"/>
</dbReference>
<dbReference type="PDB" id="7NL9">
    <property type="method" value="EM"/>
    <property type="resolution" value="2.86 A"/>
    <property type="chains" value="G=1-307"/>
</dbReference>
<dbReference type="PDB" id="7Y5A">
    <property type="method" value="EM"/>
    <property type="resolution" value="3.50 A"/>
    <property type="chains" value="G=1-307"/>
</dbReference>
<dbReference type="PDB" id="7Y5B">
    <property type="method" value="EM"/>
    <property type="resolution" value="4.40 A"/>
    <property type="chains" value="G=1-307"/>
</dbReference>
<dbReference type="PDB" id="7Y5C">
    <property type="method" value="EM"/>
    <property type="resolution" value="4.70 A"/>
    <property type="chains" value="G=1-307"/>
</dbReference>
<dbReference type="PDB" id="7Y5D">
    <property type="method" value="EM"/>
    <property type="resolution" value="7.30 A"/>
    <property type="chains" value="G=1-307"/>
</dbReference>
<dbReference type="PDB" id="8G08">
    <property type="method" value="EM"/>
    <property type="resolution" value="2.80 A"/>
    <property type="chains" value="G=1-307"/>
</dbReference>
<dbReference type="PDB" id="8G09">
    <property type="method" value="EM"/>
    <property type="resolution" value="3.10 A"/>
    <property type="chains" value="G=1-307"/>
</dbReference>
<dbReference type="PDB" id="8G0A">
    <property type="method" value="EM"/>
    <property type="resolution" value="2.90 A"/>
    <property type="chains" value="G=1-307"/>
</dbReference>
<dbReference type="PDB" id="8G0C">
    <property type="method" value="EM"/>
    <property type="resolution" value="2.80 A"/>
    <property type="chains" value="G=1-307"/>
</dbReference>
<dbReference type="PDB" id="8G0D">
    <property type="method" value="EM"/>
    <property type="resolution" value="2.90 A"/>
    <property type="chains" value="G=1-307"/>
</dbReference>
<dbReference type="PDB" id="8G0E">
    <property type="method" value="EM"/>
    <property type="resolution" value="2.60 A"/>
    <property type="chains" value="G=1-307"/>
</dbReference>
<dbReference type="PDBsum" id="6FOC"/>
<dbReference type="PDBsum" id="7JG5"/>
<dbReference type="PDBsum" id="7JG6"/>
<dbReference type="PDBsum" id="7JG7"/>
<dbReference type="PDBsum" id="7JG8"/>
<dbReference type="PDBsum" id="7JG9"/>
<dbReference type="PDBsum" id="7JGA"/>
<dbReference type="PDBsum" id="7NJK"/>
<dbReference type="PDBsum" id="7NJL"/>
<dbReference type="PDBsum" id="7NJM"/>
<dbReference type="PDBsum" id="7NJN"/>
<dbReference type="PDBsum" id="7NJO"/>
<dbReference type="PDBsum" id="7NJP"/>
<dbReference type="PDBsum" id="7NJQ"/>
<dbReference type="PDBsum" id="7NJR"/>
<dbReference type="PDBsum" id="7NJS"/>
<dbReference type="PDBsum" id="7NK7"/>
<dbReference type="PDBsum" id="7NK9"/>
<dbReference type="PDBsum" id="7NKB"/>
<dbReference type="PDBsum" id="7NKH"/>
<dbReference type="PDBsum" id="7NKJ"/>
<dbReference type="PDBsum" id="7NKK"/>
<dbReference type="PDBsum" id="7NKN"/>
<dbReference type="PDBsum" id="7NKP"/>
<dbReference type="PDBsum" id="7NL9"/>
<dbReference type="PDBsum" id="7Y5A"/>
<dbReference type="PDBsum" id="7Y5B"/>
<dbReference type="PDBsum" id="7Y5C"/>
<dbReference type="PDBsum" id="7Y5D"/>
<dbReference type="PDBsum" id="8G08"/>
<dbReference type="PDBsum" id="8G09"/>
<dbReference type="PDBsum" id="8G0A"/>
<dbReference type="PDBsum" id="8G0C"/>
<dbReference type="PDBsum" id="8G0D"/>
<dbReference type="PDBsum" id="8G0E"/>
<dbReference type="EMDB" id="EMD-12377"/>
<dbReference type="EMDB" id="EMD-12382"/>
<dbReference type="EMDB" id="EMD-12387"/>
<dbReference type="EMDB" id="EMD-12392"/>
<dbReference type="EMDB" id="EMD-12397"/>
<dbReference type="EMDB" id="EMD-12402"/>
<dbReference type="EMDB" id="EMD-12407"/>
<dbReference type="EMDB" id="EMD-12412"/>
<dbReference type="EMDB" id="EMD-12417"/>
<dbReference type="EMDB" id="EMD-12432"/>
<dbReference type="EMDB" id="EMD-12434"/>
<dbReference type="EMDB" id="EMD-12436"/>
<dbReference type="EMDB" id="EMD-12439"/>
<dbReference type="EMDB" id="EMD-12441"/>
<dbReference type="EMDB" id="EMD-12442"/>
<dbReference type="EMDB" id="EMD-12444"/>
<dbReference type="EMDB" id="EMD-12461"/>
<dbReference type="EMDB" id="EMD-29649"/>
<dbReference type="EMDB" id="EMD-29650"/>
<dbReference type="EMDB" id="EMD-29651"/>
<dbReference type="EMDB" id="EMD-29653"/>
<dbReference type="EMDB" id="EMD-29654"/>
<dbReference type="EMDB" id="EMD-29655"/>
<dbReference type="EMDB" id="EMD-33614"/>
<dbReference type="EMDB" id="EMD-33615"/>
<dbReference type="EMDB" id="EMD-33616"/>
<dbReference type="EMDB" id="EMD-33617"/>
<dbReference type="SMR" id="A0R201"/>
<dbReference type="STRING" id="246196.MSMEG_4937"/>
<dbReference type="PaxDb" id="246196-MSMEI_4810"/>
<dbReference type="KEGG" id="msb:LJ00_24415"/>
<dbReference type="KEGG" id="msg:MSMEI_4810"/>
<dbReference type="KEGG" id="msm:MSMEG_4937"/>
<dbReference type="PATRIC" id="fig|246196.19.peg.4816"/>
<dbReference type="eggNOG" id="COG0224">
    <property type="taxonomic scope" value="Bacteria"/>
</dbReference>
<dbReference type="OrthoDB" id="9812769at2"/>
<dbReference type="Proteomes" id="UP000000757">
    <property type="component" value="Chromosome"/>
</dbReference>
<dbReference type="Proteomes" id="UP000006158">
    <property type="component" value="Chromosome"/>
</dbReference>
<dbReference type="GO" id="GO:0005886">
    <property type="term" value="C:plasma membrane"/>
    <property type="evidence" value="ECO:0007669"/>
    <property type="project" value="UniProtKB-SubCell"/>
</dbReference>
<dbReference type="GO" id="GO:0045259">
    <property type="term" value="C:proton-transporting ATP synthase complex"/>
    <property type="evidence" value="ECO:0007669"/>
    <property type="project" value="UniProtKB-KW"/>
</dbReference>
<dbReference type="GO" id="GO:0005524">
    <property type="term" value="F:ATP binding"/>
    <property type="evidence" value="ECO:0007669"/>
    <property type="project" value="UniProtKB-UniRule"/>
</dbReference>
<dbReference type="GO" id="GO:0046933">
    <property type="term" value="F:proton-transporting ATP synthase activity, rotational mechanism"/>
    <property type="evidence" value="ECO:0007669"/>
    <property type="project" value="UniProtKB-UniRule"/>
</dbReference>
<dbReference type="GO" id="GO:0042777">
    <property type="term" value="P:proton motive force-driven plasma membrane ATP synthesis"/>
    <property type="evidence" value="ECO:0007669"/>
    <property type="project" value="UniProtKB-UniRule"/>
</dbReference>
<dbReference type="CDD" id="cd12151">
    <property type="entry name" value="F1-ATPase_gamma"/>
    <property type="match status" value="1"/>
</dbReference>
<dbReference type="Gene3D" id="3.40.1380.10">
    <property type="match status" value="1"/>
</dbReference>
<dbReference type="Gene3D" id="1.10.287.80">
    <property type="entry name" value="ATP synthase, gamma subunit, helix hairpin domain"/>
    <property type="match status" value="1"/>
</dbReference>
<dbReference type="HAMAP" id="MF_00815">
    <property type="entry name" value="ATP_synth_gamma_bact"/>
    <property type="match status" value="1"/>
</dbReference>
<dbReference type="InterPro" id="IPR035968">
    <property type="entry name" value="ATP_synth_F1_ATPase_gsu"/>
</dbReference>
<dbReference type="InterPro" id="IPR000131">
    <property type="entry name" value="ATP_synth_F1_gsu"/>
</dbReference>
<dbReference type="InterPro" id="IPR023632">
    <property type="entry name" value="ATP_synth_F1_gsu_CS"/>
</dbReference>
<dbReference type="NCBIfam" id="TIGR01146">
    <property type="entry name" value="ATPsyn_F1gamma"/>
    <property type="match status" value="1"/>
</dbReference>
<dbReference type="NCBIfam" id="NF004145">
    <property type="entry name" value="PRK05621.1-2"/>
    <property type="match status" value="1"/>
</dbReference>
<dbReference type="PANTHER" id="PTHR11693">
    <property type="entry name" value="ATP SYNTHASE GAMMA CHAIN"/>
    <property type="match status" value="1"/>
</dbReference>
<dbReference type="PANTHER" id="PTHR11693:SF22">
    <property type="entry name" value="ATP SYNTHASE SUBUNIT GAMMA, MITOCHONDRIAL"/>
    <property type="match status" value="1"/>
</dbReference>
<dbReference type="Pfam" id="PF00231">
    <property type="entry name" value="ATP-synt"/>
    <property type="match status" value="1"/>
</dbReference>
<dbReference type="PRINTS" id="PR00126">
    <property type="entry name" value="ATPASEGAMMA"/>
</dbReference>
<dbReference type="SUPFAM" id="SSF52943">
    <property type="entry name" value="ATP synthase (F1-ATPase), gamma subunit"/>
    <property type="match status" value="1"/>
</dbReference>
<dbReference type="PROSITE" id="PS00153">
    <property type="entry name" value="ATPASE_GAMMA"/>
    <property type="match status" value="1"/>
</dbReference>
<reference key="1">
    <citation type="submission" date="2006-10" db="EMBL/GenBank/DDBJ databases">
        <authorList>
            <person name="Fleischmann R.D."/>
            <person name="Dodson R.J."/>
            <person name="Haft D.H."/>
            <person name="Merkel J.S."/>
            <person name="Nelson W.C."/>
            <person name="Fraser C.M."/>
        </authorList>
    </citation>
    <scope>NUCLEOTIDE SEQUENCE [LARGE SCALE GENOMIC DNA]</scope>
    <source>
        <strain>ATCC 700084 / mc(2)155</strain>
    </source>
</reference>
<reference key="2">
    <citation type="journal article" date="2007" name="Genome Biol.">
        <title>Interrupted coding sequences in Mycobacterium smegmatis: authentic mutations or sequencing errors?</title>
        <authorList>
            <person name="Deshayes C."/>
            <person name="Perrodou E."/>
            <person name="Gallien S."/>
            <person name="Euphrasie D."/>
            <person name="Schaeffer C."/>
            <person name="Van-Dorsselaer A."/>
            <person name="Poch O."/>
            <person name="Lecompte O."/>
            <person name="Reyrat J.-M."/>
        </authorList>
    </citation>
    <scope>NUCLEOTIDE SEQUENCE [LARGE SCALE GENOMIC DNA]</scope>
    <source>
        <strain>ATCC 700084 / mc(2)155</strain>
    </source>
</reference>
<reference key="3">
    <citation type="journal article" date="2009" name="Genome Res.">
        <title>Ortho-proteogenomics: multiple proteomes investigation through orthology and a new MS-based protocol.</title>
        <authorList>
            <person name="Gallien S."/>
            <person name="Perrodou E."/>
            <person name="Carapito C."/>
            <person name="Deshayes C."/>
            <person name="Reyrat J.-M."/>
            <person name="Van Dorsselaer A."/>
            <person name="Poch O."/>
            <person name="Schaeffer C."/>
            <person name="Lecompte O."/>
        </authorList>
    </citation>
    <scope>NUCLEOTIDE SEQUENCE [LARGE SCALE GENOMIC DNA]</scope>
    <scope>IDENTIFICATION BY MASS SPECTROMETRY [LARGE SCALE ANALYSIS]</scope>
    <scope>CLEAVAGE OF INITIATOR METHIONINE</scope>
    <source>
        <strain>ATCC 700084 / mc(2)155</strain>
    </source>
</reference>
<organism>
    <name type="scientific">Mycolicibacterium smegmatis (strain ATCC 700084 / mc(2)155)</name>
    <name type="common">Mycobacterium smegmatis</name>
    <dbReference type="NCBI Taxonomy" id="246196"/>
    <lineage>
        <taxon>Bacteria</taxon>
        <taxon>Bacillati</taxon>
        <taxon>Actinomycetota</taxon>
        <taxon>Actinomycetes</taxon>
        <taxon>Mycobacteriales</taxon>
        <taxon>Mycobacteriaceae</taxon>
        <taxon>Mycolicibacterium</taxon>
    </lineage>
</organism>
<sequence>MAATLRELRGRIRSAGSIKKITKAQELIATSRIAKAQARVEAARPYAAEITNMLTELAGASALDHPLLVERKQPKRAGVLVVSSDRGLCGAYNANVLRRAEELFSLLRDEGKDPVLYVVGRKALGYFSFRQRTVVESWTGFSERPTYENAREIADTLVNAFMAGADDEGDDAGADGILGVDELHIVFTEFRSMLSQTAVARRAAPMEVEYVGEVETGPRTLYSFEPDPETLFDALLPRYIATRVYAALLEAAASESASRRRAMKSATDNADDLIKALTLAANRERQAQITQEISEIVGGANALAGSK</sequence>
<accession>A0R201</accession>
<accession>I7FIQ7</accession>
<keyword id="KW-0002">3D-structure</keyword>
<keyword id="KW-0066">ATP synthesis</keyword>
<keyword id="KW-1003">Cell membrane</keyword>
<keyword id="KW-0139">CF(1)</keyword>
<keyword id="KW-0375">Hydrogen ion transport</keyword>
<keyword id="KW-0406">Ion transport</keyword>
<keyword id="KW-0472">Membrane</keyword>
<keyword id="KW-1185">Reference proteome</keyword>
<keyword id="KW-0813">Transport</keyword>